<feature type="chain" id="PRO_0000231312" description="S-adenosylmethionine:tRNA ribosyltransferase-isomerase">
    <location>
        <begin position="1"/>
        <end position="345"/>
    </location>
</feature>
<keyword id="KW-0963">Cytoplasm</keyword>
<keyword id="KW-0671">Queuosine biosynthesis</keyword>
<keyword id="KW-1185">Reference proteome</keyword>
<keyword id="KW-0949">S-adenosyl-L-methionine</keyword>
<keyword id="KW-0808">Transferase</keyword>
<reference key="1">
    <citation type="journal article" date="2005" name="Arch. Microbiol.">
        <title>The genome sequence of an anaerobic aromatic-degrading denitrifying bacterium, strain EbN1.</title>
        <authorList>
            <person name="Rabus R."/>
            <person name="Kube M."/>
            <person name="Heider J."/>
            <person name="Beck A."/>
            <person name="Heitmann K."/>
            <person name="Widdel F."/>
            <person name="Reinhardt R."/>
        </authorList>
    </citation>
    <scope>NUCLEOTIDE SEQUENCE [LARGE SCALE GENOMIC DNA]</scope>
    <source>
        <strain>DSM 19018 / LMG 30748 / EbN1</strain>
    </source>
</reference>
<name>QUEA_AROAE</name>
<protein>
    <recommendedName>
        <fullName evidence="1">S-adenosylmethionine:tRNA ribosyltransferase-isomerase</fullName>
        <ecNumber evidence="1">2.4.99.17</ecNumber>
    </recommendedName>
    <alternativeName>
        <fullName evidence="1">Queuosine biosynthesis protein QueA</fullName>
    </alternativeName>
</protein>
<accession>Q5P721</accession>
<proteinExistence type="inferred from homology"/>
<organism>
    <name type="scientific">Aromatoleum aromaticum (strain DSM 19018 / LMG 30748 / EbN1)</name>
    <name type="common">Azoarcus sp. (strain EbN1)</name>
    <dbReference type="NCBI Taxonomy" id="76114"/>
    <lineage>
        <taxon>Bacteria</taxon>
        <taxon>Pseudomonadati</taxon>
        <taxon>Pseudomonadota</taxon>
        <taxon>Betaproteobacteria</taxon>
        <taxon>Rhodocyclales</taxon>
        <taxon>Rhodocyclaceae</taxon>
        <taxon>Aromatoleum</taxon>
    </lineage>
</organism>
<sequence length="345" mass="38138">MSLTLDDFDYLLPPELIAQAPLAERCASRLLVLDGERLDDRGFCDLPELVQPGDLLVFNDTRVIHARLYGTKETGGHIEVLIERAIGPHEALAQVRASKSPRAGSRLRLADAFDVTVLGRVGEFFHLRFPDSHDVLDLLEHHGKLPLPPYIDRSADEHDESRYQTVYARERGSVAAPTAGLHFDQPMLAELAKKGVHGAWLTLHVGAGTFQPVRVNDLGEHRMHRERYVIPQETVAAIAATRAAGRRVIAVGTTSLRALEGAAQDGPLEAGTGETELFILPGYRFQVVDALITNFHLPKSTLLMLVSAFAGLEPMRRAYTHAVGHSYRFFSYGDAMFITHRNDAI</sequence>
<dbReference type="EC" id="2.4.99.17" evidence="1"/>
<dbReference type="EMBL" id="CR555306">
    <property type="protein sequence ID" value="CAI06890.1"/>
    <property type="status" value="ALT_INIT"/>
    <property type="molecule type" value="Genomic_DNA"/>
</dbReference>
<dbReference type="RefSeq" id="WP_041646901.1">
    <property type="nucleotide sequence ID" value="NC_006513.1"/>
</dbReference>
<dbReference type="SMR" id="Q5P721"/>
<dbReference type="STRING" id="76114.ebA1413"/>
<dbReference type="KEGG" id="eba:ebA1413"/>
<dbReference type="eggNOG" id="COG0809">
    <property type="taxonomic scope" value="Bacteria"/>
</dbReference>
<dbReference type="HOGENOM" id="CLU_039110_1_0_4"/>
<dbReference type="OrthoDB" id="9805933at2"/>
<dbReference type="UniPathway" id="UPA00392"/>
<dbReference type="Proteomes" id="UP000006552">
    <property type="component" value="Chromosome"/>
</dbReference>
<dbReference type="GO" id="GO:0005737">
    <property type="term" value="C:cytoplasm"/>
    <property type="evidence" value="ECO:0007669"/>
    <property type="project" value="UniProtKB-SubCell"/>
</dbReference>
<dbReference type="GO" id="GO:0051075">
    <property type="term" value="F:S-adenosylmethionine:tRNA ribosyltransferase-isomerase activity"/>
    <property type="evidence" value="ECO:0007669"/>
    <property type="project" value="UniProtKB-EC"/>
</dbReference>
<dbReference type="GO" id="GO:0008616">
    <property type="term" value="P:queuosine biosynthetic process"/>
    <property type="evidence" value="ECO:0007669"/>
    <property type="project" value="UniProtKB-UniRule"/>
</dbReference>
<dbReference type="GO" id="GO:0002099">
    <property type="term" value="P:tRNA wobble guanine modification"/>
    <property type="evidence" value="ECO:0007669"/>
    <property type="project" value="TreeGrafter"/>
</dbReference>
<dbReference type="FunFam" id="3.40.1780.10:FF:000001">
    <property type="entry name" value="S-adenosylmethionine:tRNA ribosyltransferase-isomerase"/>
    <property type="match status" value="1"/>
</dbReference>
<dbReference type="Gene3D" id="2.40.10.240">
    <property type="entry name" value="QueA-like"/>
    <property type="match status" value="1"/>
</dbReference>
<dbReference type="Gene3D" id="3.40.1780.10">
    <property type="entry name" value="QueA-like"/>
    <property type="match status" value="1"/>
</dbReference>
<dbReference type="HAMAP" id="MF_00113">
    <property type="entry name" value="QueA"/>
    <property type="match status" value="1"/>
</dbReference>
<dbReference type="InterPro" id="IPR003699">
    <property type="entry name" value="QueA"/>
</dbReference>
<dbReference type="InterPro" id="IPR042118">
    <property type="entry name" value="QueA_dom1"/>
</dbReference>
<dbReference type="InterPro" id="IPR042119">
    <property type="entry name" value="QueA_dom2"/>
</dbReference>
<dbReference type="InterPro" id="IPR036100">
    <property type="entry name" value="QueA_sf"/>
</dbReference>
<dbReference type="NCBIfam" id="NF001140">
    <property type="entry name" value="PRK00147.1"/>
    <property type="match status" value="1"/>
</dbReference>
<dbReference type="NCBIfam" id="TIGR00113">
    <property type="entry name" value="queA"/>
    <property type="match status" value="1"/>
</dbReference>
<dbReference type="PANTHER" id="PTHR30307">
    <property type="entry name" value="S-ADENOSYLMETHIONINE:TRNA RIBOSYLTRANSFERASE-ISOMERASE"/>
    <property type="match status" value="1"/>
</dbReference>
<dbReference type="PANTHER" id="PTHR30307:SF0">
    <property type="entry name" value="S-ADENOSYLMETHIONINE:TRNA RIBOSYLTRANSFERASE-ISOMERASE"/>
    <property type="match status" value="1"/>
</dbReference>
<dbReference type="Pfam" id="PF02547">
    <property type="entry name" value="Queuosine_synth"/>
    <property type="match status" value="1"/>
</dbReference>
<dbReference type="SUPFAM" id="SSF111337">
    <property type="entry name" value="QueA-like"/>
    <property type="match status" value="1"/>
</dbReference>
<gene>
    <name evidence="1" type="primary">queA</name>
    <name type="ordered locus">AZOSEA07670</name>
    <name type="ORF">ebA1413</name>
</gene>
<comment type="function">
    <text evidence="1">Transfers and isomerizes the ribose moiety from AdoMet to the 7-aminomethyl group of 7-deazaguanine (preQ1-tRNA) to give epoxyqueuosine (oQ-tRNA).</text>
</comment>
<comment type="catalytic activity">
    <reaction evidence="1">
        <text>7-aminomethyl-7-carbaguanosine(34) in tRNA + S-adenosyl-L-methionine = epoxyqueuosine(34) in tRNA + adenine + L-methionine + 2 H(+)</text>
        <dbReference type="Rhea" id="RHEA:32155"/>
        <dbReference type="Rhea" id="RHEA-COMP:10342"/>
        <dbReference type="Rhea" id="RHEA-COMP:18582"/>
        <dbReference type="ChEBI" id="CHEBI:15378"/>
        <dbReference type="ChEBI" id="CHEBI:16708"/>
        <dbReference type="ChEBI" id="CHEBI:57844"/>
        <dbReference type="ChEBI" id="CHEBI:59789"/>
        <dbReference type="ChEBI" id="CHEBI:82833"/>
        <dbReference type="ChEBI" id="CHEBI:194443"/>
        <dbReference type="EC" id="2.4.99.17"/>
    </reaction>
</comment>
<comment type="pathway">
    <text evidence="1">tRNA modification; tRNA-queuosine biosynthesis.</text>
</comment>
<comment type="subunit">
    <text evidence="1">Monomer.</text>
</comment>
<comment type="subcellular location">
    <subcellularLocation>
        <location evidence="1">Cytoplasm</location>
    </subcellularLocation>
</comment>
<comment type="similarity">
    <text evidence="1">Belongs to the QueA family.</text>
</comment>
<comment type="sequence caution" evidence="2">
    <conflict type="erroneous initiation">
        <sequence resource="EMBL-CDS" id="CAI06890"/>
    </conflict>
</comment>
<evidence type="ECO:0000255" key="1">
    <source>
        <dbReference type="HAMAP-Rule" id="MF_00113"/>
    </source>
</evidence>
<evidence type="ECO:0000305" key="2"/>